<comment type="subcellular location">
    <subcellularLocation>
        <location>Cell outer membrane</location>
        <topology>Lipid-anchor</topology>
    </subcellularLocation>
</comment>
<comment type="miscellaneous">
    <text>Elicits an immune response in humans, mice, sheep and goats infected with B.melitensis or B.abortus, but not in B.abortus-infected cattle.</text>
</comment>
<comment type="similarity">
    <text evidence="2">Belongs to the rhizobiaceae omp19 lipoprotein family.</text>
</comment>
<feature type="signal peptide" evidence="2">
    <location>
        <begin position="1"/>
        <end position="20"/>
    </location>
</feature>
<feature type="chain" id="PRO_0000018245" description="Outer membrane lipoprotein omp19">
    <location>
        <begin position="21"/>
        <end position="177"/>
    </location>
</feature>
<feature type="region of interest" description="Disordered" evidence="1">
    <location>
        <begin position="28"/>
        <end position="79"/>
    </location>
</feature>
<feature type="compositionally biased region" description="Polar residues" evidence="1">
    <location>
        <begin position="50"/>
        <end position="77"/>
    </location>
</feature>
<feature type="lipid moiety-binding region" description="N-palmitoyl cysteine" evidence="2">
    <location>
        <position position="21"/>
    </location>
</feature>
<feature type="lipid moiety-binding region" description="S-diacylglycerol cysteine" evidence="2">
    <location>
        <position position="21"/>
    </location>
</feature>
<sequence>MGISKASLLSLAAAGIVLAGCQSSRLGNLDNVSPPPPPAPVNAVPAGTVQKGNLDSPTQFPNAPSTDMSAQSGTQVASLPPASAPDLTPGAVAGVWNASLGGQSCKIATPQTKYGQGYRAGPLRCPGELANLASWAVNGKQLVLYDANGGTVASLYSSGQGRFDGQTTGGQAVTLSR</sequence>
<accession>P0A3P2</accession>
<accession>G0K873</accession>
<accession>Q44663</accession>
<accession>Q44699</accession>
<dbReference type="EMBL" id="AE014291">
    <property type="protein sequence ID" value="AAN30822.1"/>
    <property type="molecule type" value="Genomic_DNA"/>
</dbReference>
<dbReference type="EMBL" id="CP002997">
    <property type="protein sequence ID" value="AEM19239.1"/>
    <property type="molecule type" value="Genomic_DNA"/>
</dbReference>
<dbReference type="RefSeq" id="WP_002964998.1">
    <property type="nucleotide sequence ID" value="NZ_KN046804.1"/>
</dbReference>
<dbReference type="SMR" id="P0A3P2"/>
<dbReference type="KEGG" id="bms:BR1930"/>
<dbReference type="KEGG" id="bsi:BS1330_I1924"/>
<dbReference type="PATRIC" id="fig|204722.21.peg.2981"/>
<dbReference type="HOGENOM" id="CLU_103254_0_0_5"/>
<dbReference type="PRO" id="PR:P0A3P2"/>
<dbReference type="Proteomes" id="UP000007104">
    <property type="component" value="Chromosome I"/>
</dbReference>
<dbReference type="GO" id="GO:0009279">
    <property type="term" value="C:cell outer membrane"/>
    <property type="evidence" value="ECO:0007669"/>
    <property type="project" value="UniProtKB-SubCell"/>
</dbReference>
<dbReference type="GO" id="GO:0004866">
    <property type="term" value="F:endopeptidase inhibitor activity"/>
    <property type="evidence" value="ECO:0007669"/>
    <property type="project" value="InterPro"/>
</dbReference>
<dbReference type="Gene3D" id="2.40.128.10">
    <property type="match status" value="1"/>
</dbReference>
<dbReference type="InterPro" id="IPR021140">
    <property type="entry name" value="Inh/Omp19"/>
</dbReference>
<dbReference type="InterPro" id="IPR010571">
    <property type="entry name" value="OM_lipoprot_Omp19_bac"/>
</dbReference>
<dbReference type="InterPro" id="IPR016085">
    <property type="entry name" value="Protease_inh_b-brl_dom"/>
</dbReference>
<dbReference type="Pfam" id="PF02974">
    <property type="entry name" value="Inh"/>
    <property type="match status" value="1"/>
</dbReference>
<dbReference type="PIRSF" id="PIRSF034005">
    <property type="entry name" value="OM_lipoprot_Omp19_bac"/>
    <property type="match status" value="1"/>
</dbReference>
<dbReference type="SUPFAM" id="SSF50882">
    <property type="entry name" value="beta-Barrel protease inhibitors"/>
    <property type="match status" value="1"/>
</dbReference>
<dbReference type="PROSITE" id="PS51257">
    <property type="entry name" value="PROKAR_LIPOPROTEIN"/>
    <property type="match status" value="1"/>
</dbReference>
<protein>
    <recommendedName>
        <fullName>Outer membrane lipoprotein omp19</fullName>
    </recommendedName>
    <alternativeName>
        <fullName>18 kDa immunoreactive antigen</fullName>
    </alternativeName>
    <alternativeName>
        <fullName>19 kDa OMP</fullName>
    </alternativeName>
    <alternativeName>
        <fullName>Minor outer membrane protein omp19</fullName>
    </alternativeName>
</protein>
<name>OMP19_BRUSU</name>
<reference key="1">
    <citation type="journal article" date="2002" name="Proc. Natl. Acad. Sci. U.S.A.">
        <title>The Brucella suis genome reveals fundamental similarities between animal and plant pathogens and symbionts.</title>
        <authorList>
            <person name="Paulsen I.T."/>
            <person name="Seshadri R."/>
            <person name="Nelson K.E."/>
            <person name="Eisen J.A."/>
            <person name="Heidelberg J.F."/>
            <person name="Read T.D."/>
            <person name="Dodson R.J."/>
            <person name="Umayam L.A."/>
            <person name="Brinkac L.M."/>
            <person name="Beanan M.J."/>
            <person name="Daugherty S.C."/>
            <person name="DeBoy R.T."/>
            <person name="Durkin A.S."/>
            <person name="Kolonay J.F."/>
            <person name="Madupu R."/>
            <person name="Nelson W.C."/>
            <person name="Ayodeji B."/>
            <person name="Kraul M."/>
            <person name="Shetty J."/>
            <person name="Malek J.A."/>
            <person name="Van Aken S.E."/>
            <person name="Riedmuller S."/>
            <person name="Tettelin H."/>
            <person name="Gill S.R."/>
            <person name="White O."/>
            <person name="Salzberg S.L."/>
            <person name="Hoover D.L."/>
            <person name="Lindler L.E."/>
            <person name="Halling S.M."/>
            <person name="Boyle S.M."/>
            <person name="Fraser C.M."/>
        </authorList>
    </citation>
    <scope>NUCLEOTIDE SEQUENCE [LARGE SCALE GENOMIC DNA]</scope>
    <source>
        <strain>1330</strain>
    </source>
</reference>
<reference key="2">
    <citation type="journal article" date="2011" name="J. Bacteriol.">
        <title>Revised genome sequence of Brucella suis 1330.</title>
        <authorList>
            <person name="Tae H."/>
            <person name="Shallom S."/>
            <person name="Settlage R."/>
            <person name="Preston D."/>
            <person name="Adams L.G."/>
            <person name="Garner H.R."/>
        </authorList>
    </citation>
    <scope>NUCLEOTIDE SEQUENCE [LARGE SCALE GENOMIC DNA]</scope>
    <source>
        <strain>1330</strain>
    </source>
</reference>
<organism>
    <name type="scientific">Brucella suis biovar 1 (strain 1330)</name>
    <dbReference type="NCBI Taxonomy" id="204722"/>
    <lineage>
        <taxon>Bacteria</taxon>
        <taxon>Pseudomonadati</taxon>
        <taxon>Pseudomonadota</taxon>
        <taxon>Alphaproteobacteria</taxon>
        <taxon>Hyphomicrobiales</taxon>
        <taxon>Brucellaceae</taxon>
        <taxon>Brucella/Ochrobactrum group</taxon>
        <taxon>Brucella</taxon>
    </lineage>
</organism>
<evidence type="ECO:0000256" key="1">
    <source>
        <dbReference type="SAM" id="MobiDB-lite"/>
    </source>
</evidence>
<evidence type="ECO:0000305" key="2"/>
<gene>
    <name type="primary">omp19</name>
    <name type="ordered locus">BR1930</name>
    <name type="ordered locus">BS1330_I1924</name>
</gene>
<proteinExistence type="inferred from homology"/>
<keyword id="KW-0998">Cell outer membrane</keyword>
<keyword id="KW-0449">Lipoprotein</keyword>
<keyword id="KW-0472">Membrane</keyword>
<keyword id="KW-0564">Palmitate</keyword>
<keyword id="KW-0732">Signal</keyword>